<reference key="1">
    <citation type="journal article" date="2003" name="Mol. Microbiol.">
        <title>An integrated analysis of the genome of the hyperthermophilic archaeon Pyrococcus abyssi.</title>
        <authorList>
            <person name="Cohen G.N."/>
            <person name="Barbe V."/>
            <person name="Flament D."/>
            <person name="Galperin M."/>
            <person name="Heilig R."/>
            <person name="Lecompte O."/>
            <person name="Poch O."/>
            <person name="Prieur D."/>
            <person name="Querellou J."/>
            <person name="Ripp R."/>
            <person name="Thierry J.-C."/>
            <person name="Van der Oost J."/>
            <person name="Weissenbach J."/>
            <person name="Zivanovic Y."/>
            <person name="Forterre P."/>
        </authorList>
    </citation>
    <scope>NUCLEOTIDE SEQUENCE [LARGE SCALE GENOMIC DNA]</scope>
    <source>
        <strain>GE5 / Orsay</strain>
    </source>
</reference>
<reference key="2">
    <citation type="journal article" date="2012" name="Curr. Microbiol.">
        <title>Re-annotation of two hyperthermophilic archaea Pyrococcus abyssi GE5 and Pyrococcus furiosus DSM 3638.</title>
        <authorList>
            <person name="Gao J."/>
            <person name="Wang J."/>
        </authorList>
    </citation>
    <scope>GENOME REANNOTATION</scope>
    <source>
        <strain>GE5 / Orsay</strain>
    </source>
</reference>
<name>RFRNP_PYRAB</name>
<feature type="chain" id="PRO_0000136084" description="RNA-free ribonuclease P">
    <location>
        <begin position="1"/>
        <end position="204"/>
    </location>
</feature>
<comment type="function">
    <text evidence="1">RNA-free RNase P that catalyzes the removal of the 5'-leader sequence from pre-tRNA to produce the mature 5'-terminus.</text>
</comment>
<comment type="catalytic activity">
    <reaction evidence="1">
        <text>Endonucleolytic cleavage of RNA, removing 5'-extranucleotides from tRNA precursor.</text>
        <dbReference type="EC" id="3.1.26.5"/>
    </reaction>
</comment>
<comment type="similarity">
    <text evidence="1">Belongs to the HARP family.</text>
</comment>
<dbReference type="EC" id="3.1.26.5" evidence="1"/>
<dbReference type="EMBL" id="AJ248284">
    <property type="protein sequence ID" value="CAB49315.1"/>
    <property type="molecule type" value="Genomic_DNA"/>
</dbReference>
<dbReference type="EMBL" id="HE613800">
    <property type="protein sequence ID" value="CCE69771.1"/>
    <property type="molecule type" value="Genomic_DNA"/>
</dbReference>
<dbReference type="PIR" id="D75154">
    <property type="entry name" value="D75154"/>
</dbReference>
<dbReference type="RefSeq" id="WP_048146546.1">
    <property type="nucleotide sequence ID" value="NC_000868.1"/>
</dbReference>
<dbReference type="SMR" id="Q9V1N4"/>
<dbReference type="STRING" id="272844.PAB0263"/>
<dbReference type="KEGG" id="pab:PAB0263"/>
<dbReference type="PATRIC" id="fig|272844.11.peg.414"/>
<dbReference type="eggNOG" id="arCOG00720">
    <property type="taxonomic scope" value="Archaea"/>
</dbReference>
<dbReference type="HOGENOM" id="CLU_109672_0_0_2"/>
<dbReference type="OrthoDB" id="95197at2157"/>
<dbReference type="PhylomeDB" id="Q9V1N4"/>
<dbReference type="Proteomes" id="UP000000810">
    <property type="component" value="Chromosome"/>
</dbReference>
<dbReference type="Proteomes" id="UP000009139">
    <property type="component" value="Chromosome"/>
</dbReference>
<dbReference type="GO" id="GO:0004526">
    <property type="term" value="F:ribonuclease P activity"/>
    <property type="evidence" value="ECO:0007669"/>
    <property type="project" value="UniProtKB-UniRule"/>
</dbReference>
<dbReference type="GO" id="GO:0001682">
    <property type="term" value="P:tRNA 5'-leader removal"/>
    <property type="evidence" value="ECO:0007669"/>
    <property type="project" value="UniProtKB-UniRule"/>
</dbReference>
<dbReference type="CDD" id="cd18691">
    <property type="entry name" value="PIN_VapC-like"/>
    <property type="match status" value="1"/>
</dbReference>
<dbReference type="HAMAP" id="MF_01078">
    <property type="entry name" value="RNA_free_RNase_P"/>
    <property type="match status" value="1"/>
</dbReference>
<dbReference type="InterPro" id="IPR029060">
    <property type="entry name" value="PIN-like_dom_sf"/>
</dbReference>
<dbReference type="InterPro" id="IPR014856">
    <property type="entry name" value="RNA_free_RNase_P"/>
</dbReference>
<dbReference type="NCBIfam" id="NF003342">
    <property type="entry name" value="PRK04358.1-3"/>
    <property type="match status" value="1"/>
</dbReference>
<dbReference type="NCBIfam" id="TIGR03875">
    <property type="entry name" value="RNA_lig_partner"/>
    <property type="match status" value="1"/>
</dbReference>
<dbReference type="PANTHER" id="PTHR41173:SF1">
    <property type="entry name" value="RNA-FREE RIBONUCLEASE P"/>
    <property type="match status" value="1"/>
</dbReference>
<dbReference type="PANTHER" id="PTHR41173">
    <property type="entry name" value="UPF0278 PROTEIN TK1425"/>
    <property type="match status" value="1"/>
</dbReference>
<dbReference type="Pfam" id="PF08745">
    <property type="entry name" value="PIN_5"/>
    <property type="match status" value="1"/>
</dbReference>
<dbReference type="SUPFAM" id="SSF88723">
    <property type="entry name" value="PIN domain-like"/>
    <property type="match status" value="1"/>
</dbReference>
<accession>Q9V1N4</accession>
<accession>G8ZI28</accession>
<protein>
    <recommendedName>
        <fullName evidence="1">RNA-free ribonuclease P</fullName>
        <shortName evidence="1">RNA-free RNase P</shortName>
        <ecNumber evidence="1">3.1.26.5</ecNumber>
    </recommendedName>
    <alternativeName>
        <fullName evidence="1">Protein-only RNase P</fullName>
    </alternativeName>
</protein>
<gene>
    <name type="ordered locus">PYRAB03930</name>
    <name type="ORF">PAB0263</name>
</gene>
<sequence>MIRFVLDTSIFVNPDVRKKFGETPTKAMKTFLKYAESLFGHVEFYMPPGIYREVMHFVEEEEVSPDIELYIIKKPPNVHDIKIPAFVVYELIEDIRRRVDKGLRVAEKAVRESVIDTSNVDKIIQKLRRNYRKALREGILDSKEDFELILLAKELDGIIVSADVGILTWAEKMGIKWVDAFKFKEVLEELVEKLKRSESEKERK</sequence>
<keyword id="KW-0255">Endonuclease</keyword>
<keyword id="KW-0378">Hydrolase</keyword>
<keyword id="KW-0540">Nuclease</keyword>
<keyword id="KW-0819">tRNA processing</keyword>
<proteinExistence type="inferred from homology"/>
<organism>
    <name type="scientific">Pyrococcus abyssi (strain GE5 / Orsay)</name>
    <dbReference type="NCBI Taxonomy" id="272844"/>
    <lineage>
        <taxon>Archaea</taxon>
        <taxon>Methanobacteriati</taxon>
        <taxon>Methanobacteriota</taxon>
        <taxon>Thermococci</taxon>
        <taxon>Thermococcales</taxon>
        <taxon>Thermococcaceae</taxon>
        <taxon>Pyrococcus</taxon>
    </lineage>
</organism>
<evidence type="ECO:0000255" key="1">
    <source>
        <dbReference type="HAMAP-Rule" id="MF_01078"/>
    </source>
</evidence>